<proteinExistence type="inferred from homology"/>
<organism>
    <name type="scientific">Oceanobacillus iheyensis (strain DSM 14371 / CIP 107618 / JCM 11309 / KCTC 3954 / HTE831)</name>
    <dbReference type="NCBI Taxonomy" id="221109"/>
    <lineage>
        <taxon>Bacteria</taxon>
        <taxon>Bacillati</taxon>
        <taxon>Bacillota</taxon>
        <taxon>Bacilli</taxon>
        <taxon>Bacillales</taxon>
        <taxon>Bacillaceae</taxon>
        <taxon>Oceanobacillus</taxon>
    </lineage>
</organism>
<comment type="function">
    <text evidence="1">Promotes RNA polymerase assembly. Latches the N- and C-terminal regions of the beta' subunit thereby facilitating its interaction with the beta and alpha subunits.</text>
</comment>
<comment type="catalytic activity">
    <reaction evidence="1">
        <text>RNA(n) + a ribonucleoside 5'-triphosphate = RNA(n+1) + diphosphate</text>
        <dbReference type="Rhea" id="RHEA:21248"/>
        <dbReference type="Rhea" id="RHEA-COMP:14527"/>
        <dbReference type="Rhea" id="RHEA-COMP:17342"/>
        <dbReference type="ChEBI" id="CHEBI:33019"/>
        <dbReference type="ChEBI" id="CHEBI:61557"/>
        <dbReference type="ChEBI" id="CHEBI:140395"/>
        <dbReference type="EC" id="2.7.7.6"/>
    </reaction>
</comment>
<comment type="subunit">
    <text evidence="1">The RNAP catalytic core consists of 2 alpha, 1 beta, 1 beta' and 1 omega subunit. When a sigma factor is associated with the core the holoenzyme is formed, which can initiate transcription.</text>
</comment>
<comment type="similarity">
    <text evidence="1">Belongs to the RNA polymerase subunit omega family.</text>
</comment>
<name>RPOZ_OCEIH</name>
<evidence type="ECO:0000255" key="1">
    <source>
        <dbReference type="HAMAP-Rule" id="MF_00366"/>
    </source>
</evidence>
<reference key="1">
    <citation type="journal article" date="2002" name="Nucleic Acids Res.">
        <title>Genome sequence of Oceanobacillus iheyensis isolated from the Iheya Ridge and its unexpected adaptive capabilities to extreme environments.</title>
        <authorList>
            <person name="Takami H."/>
            <person name="Takaki Y."/>
            <person name="Uchiyama I."/>
        </authorList>
    </citation>
    <scope>NUCLEOTIDE SEQUENCE [LARGE SCALE GENOMIC DNA]</scope>
    <source>
        <strain>DSM 14371 / CIP 107618 / JCM 11309 / KCTC 3954 / HTE831</strain>
    </source>
</reference>
<accession>Q8ER27</accession>
<dbReference type="EC" id="2.7.7.6" evidence="1"/>
<dbReference type="EMBL" id="BA000028">
    <property type="protein sequence ID" value="BAC13459.1"/>
    <property type="molecule type" value="Genomic_DNA"/>
</dbReference>
<dbReference type="RefSeq" id="WP_011065904.1">
    <property type="nucleotide sequence ID" value="NC_004193.1"/>
</dbReference>
<dbReference type="SMR" id="Q8ER27"/>
<dbReference type="STRING" id="221109.gene:10733743"/>
<dbReference type="KEGG" id="oih:OB1503"/>
<dbReference type="eggNOG" id="COG1758">
    <property type="taxonomic scope" value="Bacteria"/>
</dbReference>
<dbReference type="HOGENOM" id="CLU_125406_6_0_9"/>
<dbReference type="OrthoDB" id="9815459at2"/>
<dbReference type="PhylomeDB" id="Q8ER27"/>
<dbReference type="Proteomes" id="UP000000822">
    <property type="component" value="Chromosome"/>
</dbReference>
<dbReference type="GO" id="GO:0000428">
    <property type="term" value="C:DNA-directed RNA polymerase complex"/>
    <property type="evidence" value="ECO:0007669"/>
    <property type="project" value="UniProtKB-KW"/>
</dbReference>
<dbReference type="GO" id="GO:0003677">
    <property type="term" value="F:DNA binding"/>
    <property type="evidence" value="ECO:0007669"/>
    <property type="project" value="UniProtKB-UniRule"/>
</dbReference>
<dbReference type="GO" id="GO:0003899">
    <property type="term" value="F:DNA-directed RNA polymerase activity"/>
    <property type="evidence" value="ECO:0007669"/>
    <property type="project" value="UniProtKB-UniRule"/>
</dbReference>
<dbReference type="GO" id="GO:0006351">
    <property type="term" value="P:DNA-templated transcription"/>
    <property type="evidence" value="ECO:0007669"/>
    <property type="project" value="UniProtKB-UniRule"/>
</dbReference>
<dbReference type="Gene3D" id="3.90.940.10">
    <property type="match status" value="1"/>
</dbReference>
<dbReference type="HAMAP" id="MF_00366">
    <property type="entry name" value="RNApol_bact_RpoZ"/>
    <property type="match status" value="1"/>
</dbReference>
<dbReference type="InterPro" id="IPR003716">
    <property type="entry name" value="DNA-dir_RNA_pol_omega"/>
</dbReference>
<dbReference type="InterPro" id="IPR006110">
    <property type="entry name" value="Pol_omega/Rpo6/RPB6"/>
</dbReference>
<dbReference type="InterPro" id="IPR036161">
    <property type="entry name" value="RPB6/omega-like_sf"/>
</dbReference>
<dbReference type="NCBIfam" id="TIGR00690">
    <property type="entry name" value="rpoZ"/>
    <property type="match status" value="1"/>
</dbReference>
<dbReference type="PANTHER" id="PTHR34476">
    <property type="entry name" value="DNA-DIRECTED RNA POLYMERASE SUBUNIT OMEGA"/>
    <property type="match status" value="1"/>
</dbReference>
<dbReference type="PANTHER" id="PTHR34476:SF1">
    <property type="entry name" value="DNA-DIRECTED RNA POLYMERASE SUBUNIT OMEGA"/>
    <property type="match status" value="1"/>
</dbReference>
<dbReference type="Pfam" id="PF01192">
    <property type="entry name" value="RNA_pol_Rpb6"/>
    <property type="match status" value="1"/>
</dbReference>
<dbReference type="SMART" id="SM01409">
    <property type="entry name" value="RNA_pol_Rpb6"/>
    <property type="match status" value="1"/>
</dbReference>
<dbReference type="SUPFAM" id="SSF63562">
    <property type="entry name" value="RPB6/omega subunit-like"/>
    <property type="match status" value="1"/>
</dbReference>
<gene>
    <name evidence="1" type="primary">rpoZ</name>
    <name type="ordered locus">OB1503</name>
</gene>
<protein>
    <recommendedName>
        <fullName evidence="1">DNA-directed RNA polymerase subunit omega</fullName>
        <shortName evidence="1">RNAP omega subunit</shortName>
        <ecNumber evidence="1">2.7.7.6</ecNumber>
    </recommendedName>
    <alternativeName>
        <fullName evidence="1">RNA polymerase omega subunit</fullName>
    </alternativeName>
    <alternativeName>
        <fullName evidence="1">Transcriptase subunit omega</fullName>
    </alternativeName>
</protein>
<feature type="chain" id="PRO_0000128957" description="DNA-directed RNA polymerase subunit omega">
    <location>
        <begin position="1"/>
        <end position="64"/>
    </location>
</feature>
<keyword id="KW-0240">DNA-directed RNA polymerase</keyword>
<keyword id="KW-0548">Nucleotidyltransferase</keyword>
<keyword id="KW-1185">Reference proteome</keyword>
<keyword id="KW-0804">Transcription</keyword>
<keyword id="KW-0808">Transferase</keyword>
<sequence length="64" mass="7323">MMLEPSIDSLQKRIKSKYSLVTLSARRARQLSETNQPLVEKSKSHKFVGMALEEIEAGKLYIEN</sequence>